<comment type="function">
    <text evidence="1">Catalyzes the irreversible NADPH-dependent deamination of GMP to IMP. It functions in the conversion of nucleobase, nucleoside and nucleotide derivatives of G to A nucleotides, and in maintaining the intracellular balance of A and G nucleotides.</text>
</comment>
<comment type="catalytic activity">
    <reaction evidence="1">
        <text>IMP + NH4(+) + NADP(+) = GMP + NADPH + 2 H(+)</text>
        <dbReference type="Rhea" id="RHEA:17185"/>
        <dbReference type="ChEBI" id="CHEBI:15378"/>
        <dbReference type="ChEBI" id="CHEBI:28938"/>
        <dbReference type="ChEBI" id="CHEBI:57783"/>
        <dbReference type="ChEBI" id="CHEBI:58053"/>
        <dbReference type="ChEBI" id="CHEBI:58115"/>
        <dbReference type="ChEBI" id="CHEBI:58349"/>
        <dbReference type="EC" id="1.7.1.7"/>
    </reaction>
</comment>
<comment type="similarity">
    <text evidence="1">Belongs to the IMPDH/GMPR family. GuaC type 2 subfamily.</text>
</comment>
<sequence>MIKTELNYGDVYLVPKKTVVDSRKECDTSVQFGPRRFAMPVYPSNMKSVVSAETCELFAREGWFYTLHRFNVDAVAFTRYMQEQGLFASISVGVNDDTYEQLDALKAAGLSPEYMTLDIANAWCVKAERMIKHIKQHFPNTFLIGGNVATAEAARDLEAWGCDAIKAGIAGGRVCITKNKTGFHRPMVSTVRDCVAAVTIPVIADGGIVEHGDIAKALVCGATMVMAGSLFAGYDESAGDIVEIAGKHYKEYFGSASQFNKGAYVNVEGKKILVEYKGSMGKLLRELQEDLQSSVSYAGGTTLAALREVEMIQVYR</sequence>
<feature type="chain" id="PRO_0000294271" description="GMP reductase">
    <location>
        <begin position="1"/>
        <end position="316"/>
    </location>
</feature>
<feature type="active site" description="Thioimidate intermediate" evidence="1">
    <location>
        <position position="175"/>
    </location>
</feature>
<feature type="binding site" evidence="1">
    <location>
        <begin position="202"/>
        <end position="225"/>
    </location>
    <ligand>
        <name>NADP(+)</name>
        <dbReference type="ChEBI" id="CHEBI:58349"/>
    </ligand>
</feature>
<dbReference type="EC" id="1.7.1.7" evidence="1"/>
<dbReference type="EMBL" id="AE016825">
    <property type="protein sequence ID" value="AAQ60590.1"/>
    <property type="molecule type" value="Genomic_DNA"/>
</dbReference>
<dbReference type="RefSeq" id="WP_011136469.1">
    <property type="nucleotide sequence ID" value="NC_005085.1"/>
</dbReference>
<dbReference type="SMR" id="Q7NTY1"/>
<dbReference type="STRING" id="243365.CV_2922"/>
<dbReference type="KEGG" id="cvi:CV_2922"/>
<dbReference type="eggNOG" id="COG0516">
    <property type="taxonomic scope" value="Bacteria"/>
</dbReference>
<dbReference type="HOGENOM" id="CLU_022552_5_0_4"/>
<dbReference type="OrthoDB" id="9805398at2"/>
<dbReference type="Proteomes" id="UP000001424">
    <property type="component" value="Chromosome"/>
</dbReference>
<dbReference type="GO" id="GO:0005829">
    <property type="term" value="C:cytosol"/>
    <property type="evidence" value="ECO:0007669"/>
    <property type="project" value="TreeGrafter"/>
</dbReference>
<dbReference type="GO" id="GO:1902560">
    <property type="term" value="C:GMP reductase complex"/>
    <property type="evidence" value="ECO:0007669"/>
    <property type="project" value="InterPro"/>
</dbReference>
<dbReference type="GO" id="GO:0003920">
    <property type="term" value="F:GMP reductase activity"/>
    <property type="evidence" value="ECO:0007669"/>
    <property type="project" value="UniProtKB-UniRule"/>
</dbReference>
<dbReference type="GO" id="GO:0006163">
    <property type="term" value="P:purine nucleotide metabolic process"/>
    <property type="evidence" value="ECO:0007669"/>
    <property type="project" value="UniProtKB-UniRule"/>
</dbReference>
<dbReference type="CDD" id="cd00381">
    <property type="entry name" value="IMPDH"/>
    <property type="match status" value="1"/>
</dbReference>
<dbReference type="FunFam" id="3.20.20.70:FF:000424">
    <property type="entry name" value="Inosine-5'-monophosphate dehydrogenase 2"/>
    <property type="match status" value="1"/>
</dbReference>
<dbReference type="Gene3D" id="3.20.20.70">
    <property type="entry name" value="Aldolase class I"/>
    <property type="match status" value="1"/>
</dbReference>
<dbReference type="HAMAP" id="MF_01511">
    <property type="entry name" value="GMP_reduct_type2"/>
    <property type="match status" value="1"/>
</dbReference>
<dbReference type="InterPro" id="IPR013785">
    <property type="entry name" value="Aldolase_TIM"/>
</dbReference>
<dbReference type="InterPro" id="IPR050139">
    <property type="entry name" value="GMP_reductase"/>
</dbReference>
<dbReference type="InterPro" id="IPR005994">
    <property type="entry name" value="GuaC_type_2"/>
</dbReference>
<dbReference type="InterPro" id="IPR001093">
    <property type="entry name" value="IMP_DH_GMPRt"/>
</dbReference>
<dbReference type="NCBIfam" id="NF003966">
    <property type="entry name" value="PRK05458.1"/>
    <property type="match status" value="1"/>
</dbReference>
<dbReference type="PANTHER" id="PTHR43170">
    <property type="entry name" value="GMP REDUCTASE"/>
    <property type="match status" value="1"/>
</dbReference>
<dbReference type="PANTHER" id="PTHR43170:SF5">
    <property type="entry name" value="GMP REDUCTASE"/>
    <property type="match status" value="1"/>
</dbReference>
<dbReference type="Pfam" id="PF00478">
    <property type="entry name" value="IMPDH"/>
    <property type="match status" value="1"/>
</dbReference>
<dbReference type="PIRSF" id="PIRSF036500">
    <property type="entry name" value="GMP_red_Firmic"/>
    <property type="match status" value="1"/>
</dbReference>
<dbReference type="SMART" id="SM01240">
    <property type="entry name" value="IMPDH"/>
    <property type="match status" value="1"/>
</dbReference>
<dbReference type="SUPFAM" id="SSF51412">
    <property type="entry name" value="Inosine monophosphate dehydrogenase (IMPDH)"/>
    <property type="match status" value="1"/>
</dbReference>
<protein>
    <recommendedName>
        <fullName evidence="1">GMP reductase</fullName>
        <ecNumber evidence="1">1.7.1.7</ecNumber>
    </recommendedName>
    <alternativeName>
        <fullName evidence="1">Guanosine 5'-monophosphate oxidoreductase</fullName>
        <shortName evidence="1">Guanosine monophosphate reductase</shortName>
    </alternativeName>
</protein>
<keyword id="KW-0521">NADP</keyword>
<keyword id="KW-0560">Oxidoreductase</keyword>
<keyword id="KW-1185">Reference proteome</keyword>
<organism>
    <name type="scientific">Chromobacterium violaceum (strain ATCC 12472 / DSM 30191 / JCM 1249 / CCUG 213 / NBRC 12614 / NCIMB 9131 / NCTC 9757 / MK)</name>
    <dbReference type="NCBI Taxonomy" id="243365"/>
    <lineage>
        <taxon>Bacteria</taxon>
        <taxon>Pseudomonadati</taxon>
        <taxon>Pseudomonadota</taxon>
        <taxon>Betaproteobacteria</taxon>
        <taxon>Neisseriales</taxon>
        <taxon>Chromobacteriaceae</taxon>
        <taxon>Chromobacterium</taxon>
    </lineage>
</organism>
<proteinExistence type="inferred from homology"/>
<evidence type="ECO:0000255" key="1">
    <source>
        <dbReference type="HAMAP-Rule" id="MF_01511"/>
    </source>
</evidence>
<reference key="1">
    <citation type="journal article" date="2003" name="Proc. Natl. Acad. Sci. U.S.A.">
        <title>The complete genome sequence of Chromobacterium violaceum reveals remarkable and exploitable bacterial adaptability.</title>
        <authorList>
            <person name="Vasconcelos A.T.R."/>
            <person name="de Almeida D.F."/>
            <person name="Hungria M."/>
            <person name="Guimaraes C.T."/>
            <person name="Antonio R.V."/>
            <person name="Almeida F.C."/>
            <person name="de Almeida L.G.P."/>
            <person name="de Almeida R."/>
            <person name="Alves-Gomes J.A."/>
            <person name="Andrade E.M."/>
            <person name="Araripe J."/>
            <person name="de Araujo M.F.F."/>
            <person name="Astolfi-Filho S."/>
            <person name="Azevedo V."/>
            <person name="Baptista A.J."/>
            <person name="Bataus L.A.M."/>
            <person name="Batista J.S."/>
            <person name="Belo A."/>
            <person name="van den Berg C."/>
            <person name="Bogo M."/>
            <person name="Bonatto S."/>
            <person name="Bordignon J."/>
            <person name="Brigido M.M."/>
            <person name="Brito C.A."/>
            <person name="Brocchi M."/>
            <person name="Burity H.A."/>
            <person name="Camargo A.A."/>
            <person name="Cardoso D.D.P."/>
            <person name="Carneiro N.P."/>
            <person name="Carraro D.M."/>
            <person name="Carvalho C.M.B."/>
            <person name="Cascardo J.C.M."/>
            <person name="Cavada B.S."/>
            <person name="Chueire L.M.O."/>
            <person name="Creczynski-Pasa T.B."/>
            <person name="Cunha-Junior N.C."/>
            <person name="Fagundes N."/>
            <person name="Falcao C.L."/>
            <person name="Fantinatti F."/>
            <person name="Farias I.P."/>
            <person name="Felipe M.S.S."/>
            <person name="Ferrari L.P."/>
            <person name="Ferro J.A."/>
            <person name="Ferro M.I.T."/>
            <person name="Franco G.R."/>
            <person name="Freitas N.S.A."/>
            <person name="Furlan L.R."/>
            <person name="Gazzinelli R.T."/>
            <person name="Gomes E.A."/>
            <person name="Goncalves P.R."/>
            <person name="Grangeiro T.B."/>
            <person name="Grattapaglia D."/>
            <person name="Grisard E.C."/>
            <person name="Hanna E.S."/>
            <person name="Jardim S.N."/>
            <person name="Laurino J."/>
            <person name="Leoi L.C.T."/>
            <person name="Lima L.F.A."/>
            <person name="Loureiro M.F."/>
            <person name="Lyra M.C.C.P."/>
            <person name="Madeira H.M.F."/>
            <person name="Manfio G.P."/>
            <person name="Maranhao A.Q."/>
            <person name="Martins W.S."/>
            <person name="di Mauro S.M.Z."/>
            <person name="de Medeiros S.R.B."/>
            <person name="Meissner R.V."/>
            <person name="Moreira M.A.M."/>
            <person name="Nascimento F.F."/>
            <person name="Nicolas M.F."/>
            <person name="Oliveira J.G."/>
            <person name="Oliveira S.C."/>
            <person name="Paixao R.F.C."/>
            <person name="Parente J.A."/>
            <person name="Pedrosa F.O."/>
            <person name="Pena S.D.J."/>
            <person name="Pereira J.O."/>
            <person name="Pereira M."/>
            <person name="Pinto L.S.R.C."/>
            <person name="Pinto L.S."/>
            <person name="Porto J.I.R."/>
            <person name="Potrich D.P."/>
            <person name="Ramalho-Neto C.E."/>
            <person name="Reis A.M.M."/>
            <person name="Rigo L.U."/>
            <person name="Rondinelli E."/>
            <person name="Santos E.B.P."/>
            <person name="Santos F.R."/>
            <person name="Schneider M.P.C."/>
            <person name="Seuanez H.N."/>
            <person name="Silva A.M.R."/>
            <person name="da Silva A.L.C."/>
            <person name="Silva D.W."/>
            <person name="Silva R."/>
            <person name="Simoes I.C."/>
            <person name="Simon D."/>
            <person name="Soares C.M.A."/>
            <person name="Soares R.B.A."/>
            <person name="Souza E.M."/>
            <person name="Souza K.R.L."/>
            <person name="Souza R.C."/>
            <person name="Steffens M.B.R."/>
            <person name="Steindel M."/>
            <person name="Teixeira S.R."/>
            <person name="Urmenyi T."/>
            <person name="Vettore A."/>
            <person name="Wassem R."/>
            <person name="Zaha A."/>
            <person name="Simpson A.J.G."/>
        </authorList>
    </citation>
    <scope>NUCLEOTIDE SEQUENCE [LARGE SCALE GENOMIC DNA]</scope>
    <source>
        <strain>ATCC 12472 / DSM 30191 / JCM 1249 / CCUG 213 / NBRC 12614 / NCIMB 9131 / NCTC 9757 / MK</strain>
    </source>
</reference>
<gene>
    <name evidence="1" type="primary">guaC</name>
    <name type="ordered locus">CV_2922</name>
</gene>
<accession>Q7NTY1</accession>
<name>GUAC_CHRVO</name>